<feature type="chain" id="PRO_1000142591" description="Large ribosomal subunit protein bL25">
    <location>
        <begin position="1"/>
        <end position="94"/>
    </location>
</feature>
<keyword id="KW-0687">Ribonucleoprotein</keyword>
<keyword id="KW-0689">Ribosomal protein</keyword>
<keyword id="KW-0694">RNA-binding</keyword>
<keyword id="KW-0699">rRNA-binding</keyword>
<proteinExistence type="inferred from homology"/>
<gene>
    <name evidence="1" type="primary">rplY</name>
    <name type="ordered locus">SEN2217</name>
</gene>
<name>RL25_SALEP</name>
<protein>
    <recommendedName>
        <fullName evidence="1">Large ribosomal subunit protein bL25</fullName>
    </recommendedName>
    <alternativeName>
        <fullName evidence="2">50S ribosomal protein L25</fullName>
    </alternativeName>
</protein>
<comment type="function">
    <text evidence="1">This is one of the proteins that binds to the 5S RNA in the ribosome where it forms part of the central protuberance.</text>
</comment>
<comment type="subunit">
    <text evidence="1">Part of the 50S ribosomal subunit; part of the 5S rRNA/L5/L18/L25 subcomplex. Contacts the 5S rRNA. Binds to the 5S rRNA independently of L5 and L18.</text>
</comment>
<comment type="similarity">
    <text evidence="1">Belongs to the bacterial ribosomal protein bL25 family.</text>
</comment>
<dbReference type="EMBL" id="AM933172">
    <property type="protein sequence ID" value="CAR33802.1"/>
    <property type="molecule type" value="Genomic_DNA"/>
</dbReference>
<dbReference type="RefSeq" id="WP_000494192.1">
    <property type="nucleotide sequence ID" value="NC_011294.1"/>
</dbReference>
<dbReference type="SMR" id="B5R194"/>
<dbReference type="KEGG" id="set:SEN2217"/>
<dbReference type="HOGENOM" id="CLU_137946_0_0_6"/>
<dbReference type="Proteomes" id="UP000000613">
    <property type="component" value="Chromosome"/>
</dbReference>
<dbReference type="GO" id="GO:0022625">
    <property type="term" value="C:cytosolic large ribosomal subunit"/>
    <property type="evidence" value="ECO:0007669"/>
    <property type="project" value="TreeGrafter"/>
</dbReference>
<dbReference type="GO" id="GO:0008097">
    <property type="term" value="F:5S rRNA binding"/>
    <property type="evidence" value="ECO:0007669"/>
    <property type="project" value="InterPro"/>
</dbReference>
<dbReference type="GO" id="GO:0003735">
    <property type="term" value="F:structural constituent of ribosome"/>
    <property type="evidence" value="ECO:0007669"/>
    <property type="project" value="InterPro"/>
</dbReference>
<dbReference type="GO" id="GO:0006412">
    <property type="term" value="P:translation"/>
    <property type="evidence" value="ECO:0007669"/>
    <property type="project" value="UniProtKB-UniRule"/>
</dbReference>
<dbReference type="CDD" id="cd00495">
    <property type="entry name" value="Ribosomal_L25_TL5_CTC"/>
    <property type="match status" value="1"/>
</dbReference>
<dbReference type="FunFam" id="2.40.240.10:FF:000002">
    <property type="entry name" value="50S ribosomal protein L25"/>
    <property type="match status" value="1"/>
</dbReference>
<dbReference type="Gene3D" id="2.40.240.10">
    <property type="entry name" value="Ribosomal Protein L25, Chain P"/>
    <property type="match status" value="1"/>
</dbReference>
<dbReference type="HAMAP" id="MF_01336">
    <property type="entry name" value="Ribosomal_bL25"/>
    <property type="match status" value="1"/>
</dbReference>
<dbReference type="InterPro" id="IPR020056">
    <property type="entry name" value="Rbsml_bL25/Gln-tRNA_synth_N"/>
</dbReference>
<dbReference type="InterPro" id="IPR011035">
    <property type="entry name" value="Ribosomal_bL25/Gln-tRNA_synth"/>
</dbReference>
<dbReference type="InterPro" id="IPR020055">
    <property type="entry name" value="Ribosomal_bL25_short"/>
</dbReference>
<dbReference type="InterPro" id="IPR029751">
    <property type="entry name" value="Ribosomal_L25_dom"/>
</dbReference>
<dbReference type="InterPro" id="IPR020930">
    <property type="entry name" value="Ribosomal_uL5_bac-type"/>
</dbReference>
<dbReference type="NCBIfam" id="NF004612">
    <property type="entry name" value="PRK05943.1"/>
    <property type="match status" value="1"/>
</dbReference>
<dbReference type="PANTHER" id="PTHR33284">
    <property type="entry name" value="RIBOSOMAL PROTEIN L25/GLN-TRNA SYNTHETASE, ANTI-CODON-BINDING DOMAIN-CONTAINING PROTEIN"/>
    <property type="match status" value="1"/>
</dbReference>
<dbReference type="PANTHER" id="PTHR33284:SF1">
    <property type="entry name" value="RIBOSOMAL PROTEIN L25_GLN-TRNA SYNTHETASE, ANTI-CODON-BINDING DOMAIN-CONTAINING PROTEIN"/>
    <property type="match status" value="1"/>
</dbReference>
<dbReference type="Pfam" id="PF01386">
    <property type="entry name" value="Ribosomal_L25p"/>
    <property type="match status" value="1"/>
</dbReference>
<dbReference type="SUPFAM" id="SSF50715">
    <property type="entry name" value="Ribosomal protein L25-like"/>
    <property type="match status" value="1"/>
</dbReference>
<accession>B5R194</accession>
<organism>
    <name type="scientific">Salmonella enteritidis PT4 (strain P125109)</name>
    <dbReference type="NCBI Taxonomy" id="550537"/>
    <lineage>
        <taxon>Bacteria</taxon>
        <taxon>Pseudomonadati</taxon>
        <taxon>Pseudomonadota</taxon>
        <taxon>Gammaproteobacteria</taxon>
        <taxon>Enterobacterales</taxon>
        <taxon>Enterobacteriaceae</taxon>
        <taxon>Salmonella</taxon>
    </lineage>
</organism>
<sequence>MFTINAEVRKEQGKGASRRLRAANKFPAIIYGGSEAPIAIELDHDQVMNMQAKAEFYSEVLTLVVDGKEVKVKAQAVQRHAYKPKLTHIDFVRA</sequence>
<evidence type="ECO:0000255" key="1">
    <source>
        <dbReference type="HAMAP-Rule" id="MF_01336"/>
    </source>
</evidence>
<evidence type="ECO:0000305" key="2"/>
<reference key="1">
    <citation type="journal article" date="2008" name="Genome Res.">
        <title>Comparative genome analysis of Salmonella enteritidis PT4 and Salmonella gallinarum 287/91 provides insights into evolutionary and host adaptation pathways.</title>
        <authorList>
            <person name="Thomson N.R."/>
            <person name="Clayton D.J."/>
            <person name="Windhorst D."/>
            <person name="Vernikos G."/>
            <person name="Davidson S."/>
            <person name="Churcher C."/>
            <person name="Quail M.A."/>
            <person name="Stevens M."/>
            <person name="Jones M.A."/>
            <person name="Watson M."/>
            <person name="Barron A."/>
            <person name="Layton A."/>
            <person name="Pickard D."/>
            <person name="Kingsley R.A."/>
            <person name="Bignell A."/>
            <person name="Clark L."/>
            <person name="Harris B."/>
            <person name="Ormond D."/>
            <person name="Abdellah Z."/>
            <person name="Brooks K."/>
            <person name="Cherevach I."/>
            <person name="Chillingworth T."/>
            <person name="Woodward J."/>
            <person name="Norberczak H."/>
            <person name="Lord A."/>
            <person name="Arrowsmith C."/>
            <person name="Jagels K."/>
            <person name="Moule S."/>
            <person name="Mungall K."/>
            <person name="Saunders M."/>
            <person name="Whitehead S."/>
            <person name="Chabalgoity J.A."/>
            <person name="Maskell D."/>
            <person name="Humphreys T."/>
            <person name="Roberts M."/>
            <person name="Barrow P.A."/>
            <person name="Dougan G."/>
            <person name="Parkhill J."/>
        </authorList>
    </citation>
    <scope>NUCLEOTIDE SEQUENCE [LARGE SCALE GENOMIC DNA]</scope>
    <source>
        <strain>P125109</strain>
    </source>
</reference>